<keyword id="KW-0963">Cytoplasm</keyword>
<keyword id="KW-0255">Endonuclease</keyword>
<keyword id="KW-0378">Hydrolase</keyword>
<keyword id="KW-0460">Magnesium</keyword>
<keyword id="KW-0479">Metal-binding</keyword>
<keyword id="KW-0507">mRNA processing</keyword>
<keyword id="KW-0540">Nuclease</keyword>
<keyword id="KW-0694">RNA-binding</keyword>
<keyword id="KW-0698">rRNA processing</keyword>
<keyword id="KW-0699">rRNA-binding</keyword>
<keyword id="KW-0819">tRNA processing</keyword>
<gene>
    <name evidence="1" type="primary">rnc</name>
    <name type="ordered locus">FTW_0372</name>
</gene>
<sequence length="230" mass="26167">MVPEYSRFYNILGYNFKDCTLLIRALTHRSKTKKNYERLEFLGDSVLSFVIAEVLYKQFTDLAEGKLSQLRSKLVKGTTLAQLASSLKMDEYIILGASEQGGHKREKILEDVFEAVIGAIYLDSDFATVKKVILKWYQPIISSINLDTIKVKDSKSKLQEILLQNALSLPEYSIETIDGKDHEQQFTVVAVSKDLNLRVKAQGTSRKKAEQKTAEKMIEMLSQQGLHEKK</sequence>
<organism>
    <name type="scientific">Francisella tularensis subsp. tularensis (strain WY96-3418)</name>
    <dbReference type="NCBI Taxonomy" id="418136"/>
    <lineage>
        <taxon>Bacteria</taxon>
        <taxon>Pseudomonadati</taxon>
        <taxon>Pseudomonadota</taxon>
        <taxon>Gammaproteobacteria</taxon>
        <taxon>Thiotrichales</taxon>
        <taxon>Francisellaceae</taxon>
        <taxon>Francisella</taxon>
    </lineage>
</organism>
<evidence type="ECO:0000255" key="1">
    <source>
        <dbReference type="HAMAP-Rule" id="MF_00104"/>
    </source>
</evidence>
<protein>
    <recommendedName>
        <fullName evidence="1">Ribonuclease 3</fullName>
        <ecNumber evidence="1">3.1.26.3</ecNumber>
    </recommendedName>
    <alternativeName>
        <fullName evidence="1">Ribonuclease III</fullName>
        <shortName evidence="1">RNase III</shortName>
    </alternativeName>
</protein>
<feature type="chain" id="PRO_1000075759" description="Ribonuclease 3">
    <location>
        <begin position="1"/>
        <end position="230"/>
    </location>
</feature>
<feature type="domain" description="RNase III" evidence="1">
    <location>
        <begin position="5"/>
        <end position="125"/>
    </location>
</feature>
<feature type="domain" description="DRBM" evidence="1">
    <location>
        <begin position="153"/>
        <end position="223"/>
    </location>
</feature>
<feature type="active site" evidence="1">
    <location>
        <position position="44"/>
    </location>
</feature>
<feature type="active site" evidence="1">
    <location>
        <position position="114"/>
    </location>
</feature>
<feature type="binding site" evidence="1">
    <location>
        <position position="40"/>
    </location>
    <ligand>
        <name>Mg(2+)</name>
        <dbReference type="ChEBI" id="CHEBI:18420"/>
    </ligand>
</feature>
<feature type="binding site" evidence="1">
    <location>
        <position position="111"/>
    </location>
    <ligand>
        <name>Mg(2+)</name>
        <dbReference type="ChEBI" id="CHEBI:18420"/>
    </ligand>
</feature>
<feature type="binding site" evidence="1">
    <location>
        <position position="114"/>
    </location>
    <ligand>
        <name>Mg(2+)</name>
        <dbReference type="ChEBI" id="CHEBI:18420"/>
    </ligand>
</feature>
<accession>A4IWK9</accession>
<comment type="function">
    <text evidence="1">Digests double-stranded RNA. Involved in the processing of primary rRNA transcript to yield the immediate precursors to the large and small rRNAs (23S and 16S). Processes some mRNAs, and tRNAs when they are encoded in the rRNA operon. Processes pre-crRNA and tracrRNA of type II CRISPR loci if present in the organism.</text>
</comment>
<comment type="catalytic activity">
    <reaction evidence="1">
        <text>Endonucleolytic cleavage to 5'-phosphomonoester.</text>
        <dbReference type="EC" id="3.1.26.3"/>
    </reaction>
</comment>
<comment type="cofactor">
    <cofactor evidence="1">
        <name>Mg(2+)</name>
        <dbReference type="ChEBI" id="CHEBI:18420"/>
    </cofactor>
</comment>
<comment type="subunit">
    <text evidence="1">Homodimer.</text>
</comment>
<comment type="subcellular location">
    <subcellularLocation>
        <location evidence="1">Cytoplasm</location>
    </subcellularLocation>
</comment>
<comment type="similarity">
    <text evidence="1">Belongs to the ribonuclease III family.</text>
</comment>
<dbReference type="EC" id="3.1.26.3" evidence="1"/>
<dbReference type="EMBL" id="CP000608">
    <property type="protein sequence ID" value="ABO46311.1"/>
    <property type="molecule type" value="Genomic_DNA"/>
</dbReference>
<dbReference type="RefSeq" id="WP_011886486.1">
    <property type="nucleotide sequence ID" value="NC_009257.1"/>
</dbReference>
<dbReference type="SMR" id="A4IWK9"/>
<dbReference type="KEGG" id="ftw:FTW_0372"/>
<dbReference type="HOGENOM" id="CLU_000907_1_1_6"/>
<dbReference type="GO" id="GO:0005737">
    <property type="term" value="C:cytoplasm"/>
    <property type="evidence" value="ECO:0007669"/>
    <property type="project" value="UniProtKB-SubCell"/>
</dbReference>
<dbReference type="GO" id="GO:0003725">
    <property type="term" value="F:double-stranded RNA binding"/>
    <property type="evidence" value="ECO:0007669"/>
    <property type="project" value="TreeGrafter"/>
</dbReference>
<dbReference type="GO" id="GO:0046872">
    <property type="term" value="F:metal ion binding"/>
    <property type="evidence" value="ECO:0007669"/>
    <property type="project" value="UniProtKB-KW"/>
</dbReference>
<dbReference type="GO" id="GO:0004525">
    <property type="term" value="F:ribonuclease III activity"/>
    <property type="evidence" value="ECO:0007669"/>
    <property type="project" value="UniProtKB-UniRule"/>
</dbReference>
<dbReference type="GO" id="GO:0019843">
    <property type="term" value="F:rRNA binding"/>
    <property type="evidence" value="ECO:0007669"/>
    <property type="project" value="UniProtKB-KW"/>
</dbReference>
<dbReference type="GO" id="GO:0006397">
    <property type="term" value="P:mRNA processing"/>
    <property type="evidence" value="ECO:0007669"/>
    <property type="project" value="UniProtKB-UniRule"/>
</dbReference>
<dbReference type="GO" id="GO:0010468">
    <property type="term" value="P:regulation of gene expression"/>
    <property type="evidence" value="ECO:0007669"/>
    <property type="project" value="TreeGrafter"/>
</dbReference>
<dbReference type="GO" id="GO:0006364">
    <property type="term" value="P:rRNA processing"/>
    <property type="evidence" value="ECO:0007669"/>
    <property type="project" value="UniProtKB-UniRule"/>
</dbReference>
<dbReference type="GO" id="GO:0008033">
    <property type="term" value="P:tRNA processing"/>
    <property type="evidence" value="ECO:0007669"/>
    <property type="project" value="UniProtKB-KW"/>
</dbReference>
<dbReference type="CDD" id="cd10845">
    <property type="entry name" value="DSRM_RNAse_III_family"/>
    <property type="match status" value="1"/>
</dbReference>
<dbReference type="CDD" id="cd00593">
    <property type="entry name" value="RIBOc"/>
    <property type="match status" value="1"/>
</dbReference>
<dbReference type="FunFam" id="1.10.1520.10:FF:000001">
    <property type="entry name" value="Ribonuclease 3"/>
    <property type="match status" value="1"/>
</dbReference>
<dbReference type="Gene3D" id="3.30.160.20">
    <property type="match status" value="1"/>
</dbReference>
<dbReference type="Gene3D" id="1.10.1520.10">
    <property type="entry name" value="Ribonuclease III domain"/>
    <property type="match status" value="1"/>
</dbReference>
<dbReference type="HAMAP" id="MF_00104">
    <property type="entry name" value="RNase_III"/>
    <property type="match status" value="1"/>
</dbReference>
<dbReference type="InterPro" id="IPR014720">
    <property type="entry name" value="dsRBD_dom"/>
</dbReference>
<dbReference type="InterPro" id="IPR011907">
    <property type="entry name" value="RNase_III"/>
</dbReference>
<dbReference type="InterPro" id="IPR000999">
    <property type="entry name" value="RNase_III_dom"/>
</dbReference>
<dbReference type="InterPro" id="IPR036389">
    <property type="entry name" value="RNase_III_sf"/>
</dbReference>
<dbReference type="NCBIfam" id="TIGR02191">
    <property type="entry name" value="RNaseIII"/>
    <property type="match status" value="1"/>
</dbReference>
<dbReference type="PANTHER" id="PTHR11207:SF0">
    <property type="entry name" value="RIBONUCLEASE 3"/>
    <property type="match status" value="1"/>
</dbReference>
<dbReference type="PANTHER" id="PTHR11207">
    <property type="entry name" value="RIBONUCLEASE III"/>
    <property type="match status" value="1"/>
</dbReference>
<dbReference type="Pfam" id="PF00035">
    <property type="entry name" value="dsrm"/>
    <property type="match status" value="1"/>
</dbReference>
<dbReference type="Pfam" id="PF14622">
    <property type="entry name" value="Ribonucleas_3_3"/>
    <property type="match status" value="1"/>
</dbReference>
<dbReference type="SMART" id="SM00358">
    <property type="entry name" value="DSRM"/>
    <property type="match status" value="1"/>
</dbReference>
<dbReference type="SMART" id="SM00535">
    <property type="entry name" value="RIBOc"/>
    <property type="match status" value="1"/>
</dbReference>
<dbReference type="SUPFAM" id="SSF54768">
    <property type="entry name" value="dsRNA-binding domain-like"/>
    <property type="match status" value="1"/>
</dbReference>
<dbReference type="SUPFAM" id="SSF69065">
    <property type="entry name" value="RNase III domain-like"/>
    <property type="match status" value="1"/>
</dbReference>
<dbReference type="PROSITE" id="PS50137">
    <property type="entry name" value="DS_RBD"/>
    <property type="match status" value="1"/>
</dbReference>
<dbReference type="PROSITE" id="PS00517">
    <property type="entry name" value="RNASE_3_1"/>
    <property type="match status" value="1"/>
</dbReference>
<dbReference type="PROSITE" id="PS50142">
    <property type="entry name" value="RNASE_3_2"/>
    <property type="match status" value="1"/>
</dbReference>
<reference key="1">
    <citation type="journal article" date="2007" name="PLoS ONE">
        <title>Complete genomic characterization of a pathogenic A.II strain of Francisella tularensis subspecies tularensis.</title>
        <authorList>
            <person name="Beckstrom-Sternberg S.M."/>
            <person name="Auerbach R.K."/>
            <person name="Godbole S."/>
            <person name="Pearson J.V."/>
            <person name="Beckstrom-Sternberg J.S."/>
            <person name="Deng Z."/>
            <person name="Munk C."/>
            <person name="Kubota K."/>
            <person name="Zhou Y."/>
            <person name="Bruce D."/>
            <person name="Noronha J."/>
            <person name="Scheuermann R.H."/>
            <person name="Wang A."/>
            <person name="Wei X."/>
            <person name="Wang J."/>
            <person name="Hao J."/>
            <person name="Wagner D.M."/>
            <person name="Brettin T.S."/>
            <person name="Brown N."/>
            <person name="Gilna P."/>
            <person name="Keim P.S."/>
        </authorList>
    </citation>
    <scope>NUCLEOTIDE SEQUENCE [LARGE SCALE GENOMIC DNA]</scope>
    <source>
        <strain>WY96-3418</strain>
    </source>
</reference>
<proteinExistence type="inferred from homology"/>
<name>RNC_FRATW</name>